<proteinExistence type="inferred from homology"/>
<protein>
    <recommendedName>
        <fullName>Probable mannan endo-1,4-beta-mannosidase F</fullName>
        <ecNumber>3.2.1.78</ecNumber>
    </recommendedName>
    <alternativeName>
        <fullName>Endo-beta-1,4-mannanase F</fullName>
    </alternativeName>
</protein>
<feature type="signal peptide" evidence="4">
    <location>
        <begin position="1"/>
        <end position="19"/>
    </location>
</feature>
<feature type="chain" id="PRO_0000393717" description="Probable mannan endo-1,4-beta-mannosidase F">
    <location>
        <begin position="20"/>
        <end position="433"/>
    </location>
</feature>
<feature type="domain" description="CBM1" evidence="5">
    <location>
        <begin position="20"/>
        <end position="53"/>
    </location>
</feature>
<feature type="region of interest" description="Thr-rich linker">
    <location>
        <begin position="56"/>
        <end position="82"/>
    </location>
</feature>
<feature type="region of interest" description="Catalytic">
    <location>
        <begin position="83"/>
        <end position="433"/>
    </location>
</feature>
<feature type="active site" description="Proton donor" evidence="3">
    <location>
        <position position="256"/>
    </location>
</feature>
<feature type="active site" description="Nucleophile" evidence="3">
    <location>
        <position position="364"/>
    </location>
</feature>
<feature type="binding site" evidence="2">
    <location>
        <position position="142"/>
    </location>
    <ligand>
        <name>substrate</name>
    </ligand>
</feature>
<feature type="binding site" evidence="2">
    <location>
        <position position="255"/>
    </location>
    <ligand>
        <name>substrate</name>
    </ligand>
</feature>
<feature type="binding site" evidence="2">
    <location>
        <position position="331"/>
    </location>
    <ligand>
        <name>substrate</name>
    </ligand>
</feature>
<feature type="binding site" evidence="2">
    <location>
        <position position="394"/>
    </location>
    <ligand>
        <name>substrate</name>
    </ligand>
</feature>
<feature type="glycosylation site" description="N-linked (GlcNAc...) asparagine" evidence="4">
    <location>
        <position position="97"/>
    </location>
</feature>
<gene>
    <name type="primary">manF</name>
    <name type="ORF">AN9276</name>
</gene>
<evidence type="ECO:0000250" key="1"/>
<evidence type="ECO:0000250" key="2">
    <source>
        <dbReference type="UniProtKB" id="B4XC07"/>
    </source>
</evidence>
<evidence type="ECO:0000250" key="3">
    <source>
        <dbReference type="UniProtKB" id="Q99036"/>
    </source>
</evidence>
<evidence type="ECO:0000255" key="4"/>
<evidence type="ECO:0000255" key="5">
    <source>
        <dbReference type="PROSITE-ProRule" id="PRU00597"/>
    </source>
</evidence>
<evidence type="ECO:0000305" key="6"/>
<sequence>MKRQALTLIPLLGAAAAQSGPYGQCGGNDWSGATTCVSGYVCVYQNEWYSQCVPGTATSSSTTLTTTTSATTRTTTTTTSTTSVPSSTNFPSASGLNFTIDGVTDYFAGSNSYWISMLTNDADVDLVLDHIASSGHKILRIWGFNDVNTEPSTGQVWFQKHQGGVSTINTGQYGLQRLDAVVSSAEKRGIKLIINFVNNWDDYGGMSAYLNAYGGSTKTDWYTSATIQAAYRTYIKAVIDRFIDSPAIFAWELANEPRCNGCDTSILYDWIADTSAYIKSLDPLHMVCIGDEGFGLDEGSDGSYPFSYNEGLDFAANLAIDTIDFGTFHLYPGSWGVSYDWGNLWAITHGAACATAGKPCLFEEYGAPSDHCAIEVPWQTTAVSSTGIAGDLFWQWGDTLSTGQTHNDGNTIYYGSDEYTCMVTEHMERIAAR</sequence>
<accession>Q5AR04</accession>
<accession>C8VQC5</accession>
<reference key="1">
    <citation type="journal article" date="2005" name="Nature">
        <title>Sequencing of Aspergillus nidulans and comparative analysis with A. fumigatus and A. oryzae.</title>
        <authorList>
            <person name="Galagan J.E."/>
            <person name="Calvo S.E."/>
            <person name="Cuomo C."/>
            <person name="Ma L.-J."/>
            <person name="Wortman J.R."/>
            <person name="Batzoglou S."/>
            <person name="Lee S.-I."/>
            <person name="Bastuerkmen M."/>
            <person name="Spevak C.C."/>
            <person name="Clutterbuck J."/>
            <person name="Kapitonov V."/>
            <person name="Jurka J."/>
            <person name="Scazzocchio C."/>
            <person name="Farman M.L."/>
            <person name="Butler J."/>
            <person name="Purcell S."/>
            <person name="Harris S."/>
            <person name="Braus G.H."/>
            <person name="Draht O."/>
            <person name="Busch S."/>
            <person name="D'Enfert C."/>
            <person name="Bouchier C."/>
            <person name="Goldman G.H."/>
            <person name="Bell-Pedersen D."/>
            <person name="Griffiths-Jones S."/>
            <person name="Doonan J.H."/>
            <person name="Yu J."/>
            <person name="Vienken K."/>
            <person name="Pain A."/>
            <person name="Freitag M."/>
            <person name="Selker E.U."/>
            <person name="Archer D.B."/>
            <person name="Penalva M.A."/>
            <person name="Oakley B.R."/>
            <person name="Momany M."/>
            <person name="Tanaka T."/>
            <person name="Kumagai T."/>
            <person name="Asai K."/>
            <person name="Machida M."/>
            <person name="Nierman W.C."/>
            <person name="Denning D.W."/>
            <person name="Caddick M.X."/>
            <person name="Hynes M."/>
            <person name="Paoletti M."/>
            <person name="Fischer R."/>
            <person name="Miller B.L."/>
            <person name="Dyer P.S."/>
            <person name="Sachs M.S."/>
            <person name="Osmani S.A."/>
            <person name="Birren B.W."/>
        </authorList>
    </citation>
    <scope>NUCLEOTIDE SEQUENCE [LARGE SCALE GENOMIC DNA]</scope>
    <source>
        <strain>FGSC A4 / ATCC 38163 / CBS 112.46 / NRRL 194 / M139</strain>
    </source>
</reference>
<reference key="2">
    <citation type="journal article" date="2009" name="Fungal Genet. Biol.">
        <title>The 2008 update of the Aspergillus nidulans genome annotation: a community effort.</title>
        <authorList>
            <person name="Wortman J.R."/>
            <person name="Gilsenan J.M."/>
            <person name="Joardar V."/>
            <person name="Deegan J."/>
            <person name="Clutterbuck J."/>
            <person name="Andersen M.R."/>
            <person name="Archer D."/>
            <person name="Bencina M."/>
            <person name="Braus G."/>
            <person name="Coutinho P."/>
            <person name="von Dohren H."/>
            <person name="Doonan J."/>
            <person name="Driessen A.J."/>
            <person name="Durek P."/>
            <person name="Espeso E."/>
            <person name="Fekete E."/>
            <person name="Flipphi M."/>
            <person name="Estrada C.G."/>
            <person name="Geysens S."/>
            <person name="Goldman G."/>
            <person name="de Groot P.W."/>
            <person name="Hansen K."/>
            <person name="Harris S.D."/>
            <person name="Heinekamp T."/>
            <person name="Helmstaedt K."/>
            <person name="Henrissat B."/>
            <person name="Hofmann G."/>
            <person name="Homan T."/>
            <person name="Horio T."/>
            <person name="Horiuchi H."/>
            <person name="James S."/>
            <person name="Jones M."/>
            <person name="Karaffa L."/>
            <person name="Karanyi Z."/>
            <person name="Kato M."/>
            <person name="Keller N."/>
            <person name="Kelly D.E."/>
            <person name="Kiel J.A."/>
            <person name="Kim J.M."/>
            <person name="van der Klei I.J."/>
            <person name="Klis F.M."/>
            <person name="Kovalchuk A."/>
            <person name="Krasevec N."/>
            <person name="Kubicek C.P."/>
            <person name="Liu B."/>
            <person name="Maccabe A."/>
            <person name="Meyer V."/>
            <person name="Mirabito P."/>
            <person name="Miskei M."/>
            <person name="Mos M."/>
            <person name="Mullins J."/>
            <person name="Nelson D.R."/>
            <person name="Nielsen J."/>
            <person name="Oakley B.R."/>
            <person name="Osmani S.A."/>
            <person name="Pakula T."/>
            <person name="Paszewski A."/>
            <person name="Paulsen I."/>
            <person name="Pilsyk S."/>
            <person name="Pocsi I."/>
            <person name="Punt P.J."/>
            <person name="Ram A.F."/>
            <person name="Ren Q."/>
            <person name="Robellet X."/>
            <person name="Robson G."/>
            <person name="Seiboth B."/>
            <person name="van Solingen P."/>
            <person name="Specht T."/>
            <person name="Sun J."/>
            <person name="Taheri-Talesh N."/>
            <person name="Takeshita N."/>
            <person name="Ussery D."/>
            <person name="vanKuyk P.A."/>
            <person name="Visser H."/>
            <person name="van de Vondervoort P.J."/>
            <person name="de Vries R.P."/>
            <person name="Walton J."/>
            <person name="Xiang X."/>
            <person name="Xiong Y."/>
            <person name="Zeng A.P."/>
            <person name="Brandt B.W."/>
            <person name="Cornell M.J."/>
            <person name="van den Hondel C.A."/>
            <person name="Visser J."/>
            <person name="Oliver S.G."/>
            <person name="Turner G."/>
        </authorList>
    </citation>
    <scope>GENOME REANNOTATION</scope>
    <source>
        <strain>FGSC A4 / ATCC 38163 / CBS 112.46 / NRRL 194 / M139</strain>
    </source>
</reference>
<keyword id="KW-0119">Carbohydrate metabolism</keyword>
<keyword id="KW-0325">Glycoprotein</keyword>
<keyword id="KW-0326">Glycosidase</keyword>
<keyword id="KW-0378">Hydrolase</keyword>
<keyword id="KW-1185">Reference proteome</keyword>
<keyword id="KW-0964">Secreted</keyword>
<keyword id="KW-0732">Signal</keyword>
<comment type="function">
    <text>Endo-1,4-mannanase, a crucial enzyme for depolymerization of seed galactomannans and wood galactoglucomannans.</text>
</comment>
<comment type="catalytic activity">
    <reaction>
        <text>Random hydrolysis of (1-&gt;4)-beta-D-mannosidic linkages in mannans, galactomannans and glucomannans.</text>
        <dbReference type="EC" id="3.2.1.78"/>
    </reaction>
</comment>
<comment type="subcellular location">
    <subcellularLocation>
        <location evidence="1">Secreted</location>
    </subcellularLocation>
</comment>
<comment type="domain">
    <text>Has a modular structure: a carbohydrate-binding module (CBM) at the N-terminus, a linker rich in serines, and a C-terminal endo-1,4-mannanase catalytic module. The genes for catalytic modules and CBMs seem to have evolved separately and have been linked by gene fusion.</text>
</comment>
<comment type="similarity">
    <text evidence="6">Belongs to the glycosyl hydrolase 5 (cellulase A) family.</text>
</comment>
<comment type="sequence caution" evidence="6">
    <conflict type="erroneous gene model prediction">
        <sequence resource="EMBL-CDS" id="CBF87312"/>
    </conflict>
</comment>
<comment type="sequence caution" evidence="6">
    <conflict type="erroneous gene model prediction">
        <sequence resource="EMBL-CDS" id="EAA66343"/>
    </conflict>
</comment>
<name>MANF_EMENI</name>
<organism>
    <name type="scientific">Emericella nidulans (strain FGSC A4 / ATCC 38163 / CBS 112.46 / NRRL 194 / M139)</name>
    <name type="common">Aspergillus nidulans</name>
    <dbReference type="NCBI Taxonomy" id="227321"/>
    <lineage>
        <taxon>Eukaryota</taxon>
        <taxon>Fungi</taxon>
        <taxon>Dikarya</taxon>
        <taxon>Ascomycota</taxon>
        <taxon>Pezizomycotina</taxon>
        <taxon>Eurotiomycetes</taxon>
        <taxon>Eurotiomycetidae</taxon>
        <taxon>Eurotiales</taxon>
        <taxon>Aspergillaceae</taxon>
        <taxon>Aspergillus</taxon>
        <taxon>Aspergillus subgen. Nidulantes</taxon>
    </lineage>
</organism>
<dbReference type="EC" id="3.2.1.78"/>
<dbReference type="EMBL" id="AACD01000172">
    <property type="protein sequence ID" value="EAA66343.1"/>
    <property type="status" value="ALT_SEQ"/>
    <property type="molecule type" value="Genomic_DNA"/>
</dbReference>
<dbReference type="EMBL" id="BN001308">
    <property type="protein sequence ID" value="CBF87312.1"/>
    <property type="status" value="ALT_SEQ"/>
    <property type="molecule type" value="Genomic_DNA"/>
</dbReference>
<dbReference type="RefSeq" id="XP_682545.1">
    <property type="nucleotide sequence ID" value="XM_677453.1"/>
</dbReference>
<dbReference type="SMR" id="Q5AR04"/>
<dbReference type="STRING" id="227321.Q5AR04"/>
<dbReference type="CAZy" id="CBM1">
    <property type="family name" value="Carbohydrate-Binding Module Family 1"/>
</dbReference>
<dbReference type="CAZy" id="GH5">
    <property type="family name" value="Glycoside Hydrolase Family 5"/>
</dbReference>
<dbReference type="GlyCosmos" id="Q5AR04">
    <property type="glycosylation" value="1 site, No reported glycans"/>
</dbReference>
<dbReference type="KEGG" id="ani:ANIA_09276"/>
<dbReference type="eggNOG" id="ENOG502QS4Q">
    <property type="taxonomic scope" value="Eukaryota"/>
</dbReference>
<dbReference type="HOGENOM" id="CLU_031603_4_1_1"/>
<dbReference type="InParanoid" id="Q5AR04"/>
<dbReference type="OrthoDB" id="406631at2759"/>
<dbReference type="Proteomes" id="UP000000560">
    <property type="component" value="Chromosome VIII"/>
</dbReference>
<dbReference type="GO" id="GO:0005576">
    <property type="term" value="C:extracellular region"/>
    <property type="evidence" value="ECO:0007669"/>
    <property type="project" value="UniProtKB-SubCell"/>
</dbReference>
<dbReference type="GO" id="GO:0030248">
    <property type="term" value="F:cellulose binding"/>
    <property type="evidence" value="ECO:0007669"/>
    <property type="project" value="InterPro"/>
</dbReference>
<dbReference type="GO" id="GO:0016985">
    <property type="term" value="F:mannan endo-1,4-beta-mannosidase activity"/>
    <property type="evidence" value="ECO:0000318"/>
    <property type="project" value="GO_Central"/>
</dbReference>
<dbReference type="GO" id="GO:0046355">
    <property type="term" value="P:mannan catabolic process"/>
    <property type="evidence" value="ECO:0007669"/>
    <property type="project" value="UniProtKB-ARBA"/>
</dbReference>
<dbReference type="FunFam" id="3.20.20.80:FF:000076">
    <property type="entry name" value="Mannan endo-1,4-beta-mannosidase A"/>
    <property type="match status" value="1"/>
</dbReference>
<dbReference type="Gene3D" id="3.20.20.80">
    <property type="entry name" value="Glycosidases"/>
    <property type="match status" value="1"/>
</dbReference>
<dbReference type="InterPro" id="IPR035971">
    <property type="entry name" value="CBD_sf"/>
</dbReference>
<dbReference type="InterPro" id="IPR000254">
    <property type="entry name" value="Cellulose-bd_dom_fun"/>
</dbReference>
<dbReference type="InterPro" id="IPR001547">
    <property type="entry name" value="Glyco_hydro_5"/>
</dbReference>
<dbReference type="InterPro" id="IPR017853">
    <property type="entry name" value="Glycoside_hydrolase_SF"/>
</dbReference>
<dbReference type="InterPro" id="IPR045053">
    <property type="entry name" value="MAN-like"/>
</dbReference>
<dbReference type="PANTHER" id="PTHR31451">
    <property type="match status" value="1"/>
</dbReference>
<dbReference type="PANTHER" id="PTHR31451:SF39">
    <property type="entry name" value="MANNAN ENDO-1,4-BETA-MANNOSIDASE 1"/>
    <property type="match status" value="1"/>
</dbReference>
<dbReference type="Pfam" id="PF00734">
    <property type="entry name" value="CBM_1"/>
    <property type="match status" value="1"/>
</dbReference>
<dbReference type="Pfam" id="PF00150">
    <property type="entry name" value="Cellulase"/>
    <property type="match status" value="1"/>
</dbReference>
<dbReference type="SMART" id="SM00236">
    <property type="entry name" value="fCBD"/>
    <property type="match status" value="1"/>
</dbReference>
<dbReference type="SUPFAM" id="SSF51445">
    <property type="entry name" value="(Trans)glycosidases"/>
    <property type="match status" value="1"/>
</dbReference>
<dbReference type="SUPFAM" id="SSF57180">
    <property type="entry name" value="Cellulose-binding domain"/>
    <property type="match status" value="1"/>
</dbReference>
<dbReference type="PROSITE" id="PS00562">
    <property type="entry name" value="CBM1_1"/>
    <property type="match status" value="1"/>
</dbReference>
<dbReference type="PROSITE" id="PS51164">
    <property type="entry name" value="CBM1_2"/>
    <property type="match status" value="1"/>
</dbReference>